<evidence type="ECO:0000255" key="1">
    <source>
        <dbReference type="HAMAP-Rule" id="MF_00375"/>
    </source>
</evidence>
<dbReference type="EC" id="5.4.3.8" evidence="1"/>
<dbReference type="EMBL" id="CP001130">
    <property type="protein sequence ID" value="ACG57487.1"/>
    <property type="molecule type" value="Genomic_DNA"/>
</dbReference>
<dbReference type="RefSeq" id="WP_012513843.1">
    <property type="nucleotide sequence ID" value="NC_011126.1"/>
</dbReference>
<dbReference type="SMR" id="B4U8M6"/>
<dbReference type="STRING" id="380749.HY04AAS1_0800"/>
<dbReference type="KEGG" id="hya:HY04AAS1_0800"/>
<dbReference type="eggNOG" id="COG0001">
    <property type="taxonomic scope" value="Bacteria"/>
</dbReference>
<dbReference type="HOGENOM" id="CLU_016922_1_5_0"/>
<dbReference type="OrthoDB" id="9807885at2"/>
<dbReference type="UniPathway" id="UPA00251">
    <property type="reaction ID" value="UER00317"/>
</dbReference>
<dbReference type="GO" id="GO:0005737">
    <property type="term" value="C:cytoplasm"/>
    <property type="evidence" value="ECO:0007669"/>
    <property type="project" value="UniProtKB-SubCell"/>
</dbReference>
<dbReference type="GO" id="GO:0042286">
    <property type="term" value="F:glutamate-1-semialdehyde 2,1-aminomutase activity"/>
    <property type="evidence" value="ECO:0007669"/>
    <property type="project" value="UniProtKB-UniRule"/>
</dbReference>
<dbReference type="GO" id="GO:0030170">
    <property type="term" value="F:pyridoxal phosphate binding"/>
    <property type="evidence" value="ECO:0007669"/>
    <property type="project" value="InterPro"/>
</dbReference>
<dbReference type="GO" id="GO:0008483">
    <property type="term" value="F:transaminase activity"/>
    <property type="evidence" value="ECO:0007669"/>
    <property type="project" value="InterPro"/>
</dbReference>
<dbReference type="GO" id="GO:0006782">
    <property type="term" value="P:protoporphyrinogen IX biosynthetic process"/>
    <property type="evidence" value="ECO:0007669"/>
    <property type="project" value="UniProtKB-UniRule"/>
</dbReference>
<dbReference type="CDD" id="cd00610">
    <property type="entry name" value="OAT_like"/>
    <property type="match status" value="1"/>
</dbReference>
<dbReference type="FunFam" id="3.40.640.10:FF:000021">
    <property type="entry name" value="Glutamate-1-semialdehyde 2,1-aminomutase"/>
    <property type="match status" value="1"/>
</dbReference>
<dbReference type="Gene3D" id="3.90.1150.10">
    <property type="entry name" value="Aspartate Aminotransferase, domain 1"/>
    <property type="match status" value="1"/>
</dbReference>
<dbReference type="Gene3D" id="3.40.640.10">
    <property type="entry name" value="Type I PLP-dependent aspartate aminotransferase-like (Major domain)"/>
    <property type="match status" value="1"/>
</dbReference>
<dbReference type="HAMAP" id="MF_00375">
    <property type="entry name" value="HemL_aminotrans_3"/>
    <property type="match status" value="1"/>
</dbReference>
<dbReference type="InterPro" id="IPR004639">
    <property type="entry name" value="4pyrrol_synth_GluAld_NH2Trfase"/>
</dbReference>
<dbReference type="InterPro" id="IPR005814">
    <property type="entry name" value="Aminotrans_3"/>
</dbReference>
<dbReference type="InterPro" id="IPR049704">
    <property type="entry name" value="Aminotrans_3_PPA_site"/>
</dbReference>
<dbReference type="InterPro" id="IPR015424">
    <property type="entry name" value="PyrdxlP-dep_Trfase"/>
</dbReference>
<dbReference type="InterPro" id="IPR015421">
    <property type="entry name" value="PyrdxlP-dep_Trfase_major"/>
</dbReference>
<dbReference type="InterPro" id="IPR015422">
    <property type="entry name" value="PyrdxlP-dep_Trfase_small"/>
</dbReference>
<dbReference type="NCBIfam" id="TIGR00713">
    <property type="entry name" value="hemL"/>
    <property type="match status" value="1"/>
</dbReference>
<dbReference type="NCBIfam" id="NF000818">
    <property type="entry name" value="PRK00062.1"/>
    <property type="match status" value="1"/>
</dbReference>
<dbReference type="PANTHER" id="PTHR43713">
    <property type="entry name" value="GLUTAMATE-1-SEMIALDEHYDE 2,1-AMINOMUTASE"/>
    <property type="match status" value="1"/>
</dbReference>
<dbReference type="PANTHER" id="PTHR43713:SF3">
    <property type="entry name" value="GLUTAMATE-1-SEMIALDEHYDE 2,1-AMINOMUTASE 1, CHLOROPLASTIC-RELATED"/>
    <property type="match status" value="1"/>
</dbReference>
<dbReference type="Pfam" id="PF00202">
    <property type="entry name" value="Aminotran_3"/>
    <property type="match status" value="1"/>
</dbReference>
<dbReference type="SUPFAM" id="SSF53383">
    <property type="entry name" value="PLP-dependent transferases"/>
    <property type="match status" value="1"/>
</dbReference>
<dbReference type="PROSITE" id="PS00600">
    <property type="entry name" value="AA_TRANSFER_CLASS_3"/>
    <property type="match status" value="1"/>
</dbReference>
<accession>B4U8M6</accession>
<keyword id="KW-0963">Cytoplasm</keyword>
<keyword id="KW-0413">Isomerase</keyword>
<keyword id="KW-0627">Porphyrin biosynthesis</keyword>
<keyword id="KW-0663">Pyridoxal phosphate</keyword>
<name>GSA_HYDS0</name>
<gene>
    <name evidence="1" type="primary">hemL</name>
    <name type="ordered locus">HY04AAS1_0800</name>
</gene>
<protein>
    <recommendedName>
        <fullName evidence="1">Glutamate-1-semialdehyde 2,1-aminomutase</fullName>
        <shortName evidence="1">GSA</shortName>
        <ecNumber evidence="1">5.4.3.8</ecNumber>
    </recommendedName>
    <alternativeName>
        <fullName evidence="1">Glutamate-1-semialdehyde aminotransferase</fullName>
        <shortName evidence="1">GSA-AT</shortName>
    </alternativeName>
</protein>
<organism>
    <name type="scientific">Hydrogenobaculum sp. (strain Y04AAS1)</name>
    <dbReference type="NCBI Taxonomy" id="380749"/>
    <lineage>
        <taxon>Bacteria</taxon>
        <taxon>Pseudomonadati</taxon>
        <taxon>Aquificota</taxon>
        <taxon>Aquificia</taxon>
        <taxon>Aquificales</taxon>
        <taxon>Aquificaceae</taxon>
        <taxon>Hydrogenobaculum</taxon>
    </lineage>
</organism>
<sequence>MTNKEAFELAKKYMPGGVSSPVRAFKSVGAEPIVVNRGFGAFVEDIEGKKYIDYMLSFGPLILGHRSEIVVSKIMEALDKGNSFGITNMYEIELSELIIKASKVIDKVRFVSSGTEAVMSAIRLARGITNKPYIIKFDGCYHGFSDSVLVGAGSGVATLGIPGTPGIPKEFAALTIVLDYNDENALEEAFIKYKNQIAAVLVEPVAGNMGVVLPKESWLKKLRDITKENDALLIFDEVITGFRLALGGAAEYFGIEPDIVCYGKIIGGGMPIGAYGAKNHIMERVAPEGPIYQAGTLSGNPISVASGLAILKTLIKDIAIYDRLSELRAYLTYTLSKMLSEKGIPHRINEIASMFTIFFTDKDVIDFKSAKTSDTALFGKFFRNALKEGVLMPPSQFEAWFLSTAHTKDVVDTTLEKLKKAIDLL</sequence>
<proteinExistence type="inferred from homology"/>
<comment type="catalytic activity">
    <reaction evidence="1">
        <text>(S)-4-amino-5-oxopentanoate = 5-aminolevulinate</text>
        <dbReference type="Rhea" id="RHEA:14265"/>
        <dbReference type="ChEBI" id="CHEBI:57501"/>
        <dbReference type="ChEBI" id="CHEBI:356416"/>
        <dbReference type="EC" id="5.4.3.8"/>
    </reaction>
</comment>
<comment type="cofactor">
    <cofactor evidence="1">
        <name>pyridoxal 5'-phosphate</name>
        <dbReference type="ChEBI" id="CHEBI:597326"/>
    </cofactor>
</comment>
<comment type="pathway">
    <text evidence="1">Porphyrin-containing compound metabolism; protoporphyrin-IX biosynthesis; 5-aminolevulinate from L-glutamyl-tRNA(Glu): step 2/2.</text>
</comment>
<comment type="subunit">
    <text evidence="1">Homodimer.</text>
</comment>
<comment type="subcellular location">
    <subcellularLocation>
        <location evidence="1">Cytoplasm</location>
    </subcellularLocation>
</comment>
<comment type="similarity">
    <text evidence="1">Belongs to the class-III pyridoxal-phosphate-dependent aminotransferase family. HemL subfamily.</text>
</comment>
<feature type="chain" id="PRO_1000121897" description="Glutamate-1-semialdehyde 2,1-aminomutase">
    <location>
        <begin position="1"/>
        <end position="425"/>
    </location>
</feature>
<feature type="modified residue" description="N6-(pyridoxal phosphate)lysine" evidence="1">
    <location>
        <position position="264"/>
    </location>
</feature>
<reference key="1">
    <citation type="journal article" date="2009" name="J. Bacteriol.">
        <title>Complete and draft genome sequences of six members of the Aquificales.</title>
        <authorList>
            <person name="Reysenbach A.-L."/>
            <person name="Hamamura N."/>
            <person name="Podar M."/>
            <person name="Griffiths E."/>
            <person name="Ferreira S."/>
            <person name="Hochstein R."/>
            <person name="Heidelberg J."/>
            <person name="Johnson J."/>
            <person name="Mead D."/>
            <person name="Pohorille A."/>
            <person name="Sarmiento M."/>
            <person name="Schweighofer K."/>
            <person name="Seshadri R."/>
            <person name="Voytek M.A."/>
        </authorList>
    </citation>
    <scope>NUCLEOTIDE SEQUENCE [LARGE SCALE GENOMIC DNA]</scope>
    <source>
        <strain>Y04AAS1</strain>
    </source>
</reference>